<reference key="1">
    <citation type="journal article" date="1994" name="J. Mol. Evol.">
        <title>Novel features of metazoan mtDNA revealed from sequence analysis of three mitochondrial DNA segments of the land snail Albinaria turrita (Gastropoda: Clausiliidae).</title>
        <authorList>
            <person name="Lecanidou R."/>
            <person name="Douris V."/>
            <person name="Rodakis G.C."/>
        </authorList>
    </citation>
    <scope>NUCLEOTIDE SEQUENCE [GENOMIC DNA]</scope>
</reference>
<comment type="function">
    <text evidence="1">Component of the cytochrome c oxidase, the last enzyme in the mitochondrial electron transport chain which drives oxidative phosphorylation. The respiratory chain contains 3 multisubunit complexes succinate dehydrogenase (complex II, CII), ubiquinol-cytochrome c oxidoreductase (cytochrome b-c1 complex, complex III, CIII) and cytochrome c oxidase (complex IV, CIV), that cooperate to transfer electrons derived from NADH and succinate to molecular oxygen, creating an electrochemical gradient over the inner membrane that drives transmembrane transport and the ATP synthase. Cytochrome c oxidase is the component of the respiratory chain that catalyzes the reduction of oxygen to water. Electrons originating from reduced cytochrome c in the intermembrane space (IMS) are transferred via the dinuclear copper A center (CU(A)) of subunit 2 and heme A of subunit 1 to the active site in subunit 1, a binuclear center (BNC) formed by heme A3 and copper B (CU(B)). The BNC reduces molecular oxygen to 2 water molecules using 4 electrons from cytochrome c in the IMS and 4 protons from the mitochondrial matrix.</text>
</comment>
<comment type="catalytic activity">
    <reaction evidence="1">
        <text>4 Fe(II)-[cytochrome c] + O2 + 8 H(+)(in) = 4 Fe(III)-[cytochrome c] + 2 H2O + 4 H(+)(out)</text>
        <dbReference type="Rhea" id="RHEA:11436"/>
        <dbReference type="Rhea" id="RHEA-COMP:10350"/>
        <dbReference type="Rhea" id="RHEA-COMP:14399"/>
        <dbReference type="ChEBI" id="CHEBI:15377"/>
        <dbReference type="ChEBI" id="CHEBI:15378"/>
        <dbReference type="ChEBI" id="CHEBI:15379"/>
        <dbReference type="ChEBI" id="CHEBI:29033"/>
        <dbReference type="ChEBI" id="CHEBI:29034"/>
        <dbReference type="EC" id="7.1.1.9"/>
    </reaction>
    <physiologicalReaction direction="left-to-right" evidence="1">
        <dbReference type="Rhea" id="RHEA:11437"/>
    </physiologicalReaction>
</comment>
<comment type="cofactor">
    <cofactor evidence="1">
        <name>heme</name>
        <dbReference type="ChEBI" id="CHEBI:30413"/>
    </cofactor>
    <text evidence="1">Binds 2 heme A groups non-covalently per subunit.</text>
</comment>
<comment type="cofactor">
    <cofactor evidence="1">
        <name>Cu cation</name>
        <dbReference type="ChEBI" id="CHEBI:23378"/>
    </cofactor>
    <text evidence="1">Binds a copper B center.</text>
</comment>
<comment type="pathway">
    <text evidence="1">Energy metabolism; oxidative phosphorylation.</text>
</comment>
<comment type="subunit">
    <text evidence="1">Component of the cytochrome c oxidase (complex IV, CIV), a multisubunit enzyme composed of a catalytic core of 3 subunits and several supernumerary subunits. The complex exists as a monomer or a dimer and forms supercomplexes (SCs) in the inner mitochondrial membrane with ubiquinol-cytochrome c oxidoreductase (cytochrome b-c1 complex, complex III, CIII).</text>
</comment>
<comment type="subcellular location">
    <subcellularLocation>
        <location evidence="1">Mitochondrion inner membrane</location>
        <topology evidence="1">Multi-pass membrane protein</topology>
    </subcellularLocation>
</comment>
<comment type="similarity">
    <text evidence="3">Belongs to the heme-copper respiratory oxidase family.</text>
</comment>
<keyword id="KW-0186">Copper</keyword>
<keyword id="KW-0249">Electron transport</keyword>
<keyword id="KW-0349">Heme</keyword>
<keyword id="KW-0408">Iron</keyword>
<keyword id="KW-0460">Magnesium</keyword>
<keyword id="KW-0472">Membrane</keyword>
<keyword id="KW-0479">Metal-binding</keyword>
<keyword id="KW-0496">Mitochondrion</keyword>
<keyword id="KW-0999">Mitochondrion inner membrane</keyword>
<keyword id="KW-0679">Respiratory chain</keyword>
<keyword id="KW-1278">Translocase</keyword>
<keyword id="KW-0812">Transmembrane</keyword>
<keyword id="KW-1133">Transmembrane helix</keyword>
<keyword id="KW-0813">Transport</keyword>
<protein>
    <recommendedName>
        <fullName>Cytochrome c oxidase subunit 1</fullName>
        <ecNumber>7.1.1.9</ecNumber>
    </recommendedName>
    <alternativeName>
        <fullName>Cytochrome c oxidase polypeptide I</fullName>
    </alternativeName>
</protein>
<name>COX1_ALBTU</name>
<accession>Q09333</accession>
<gene>
    <name type="primary">COI</name>
</gene>
<proteinExistence type="inferred from homology"/>
<organism>
    <name type="scientific">Albinaria turrita</name>
    <name type="common">Door snail</name>
    <name type="synonym">Clausilia turrita</name>
    <dbReference type="NCBI Taxonomy" id="27820"/>
    <lineage>
        <taxon>Eukaryota</taxon>
        <taxon>Metazoa</taxon>
        <taxon>Spiralia</taxon>
        <taxon>Lophotrochozoa</taxon>
        <taxon>Mollusca</taxon>
        <taxon>Gastropoda</taxon>
        <taxon>Heterobranchia</taxon>
        <taxon>Euthyneura</taxon>
        <taxon>Panpulmonata</taxon>
        <taxon>Eupulmonata</taxon>
        <taxon>Stylommatophora</taxon>
        <taxon>Helicina</taxon>
        <taxon>Clausilioidea</taxon>
        <taxon>Clausiliidae</taxon>
        <taxon>Alopiinae</taxon>
        <taxon>Albinaria</taxon>
    </lineage>
</organism>
<sequence>IYGSKVQYTASMYWVLGFIFLFTLGGLTGIVLSNSSLDIMLHDTYYVVAHFHYVLSMGAVFAIFAGFNFWFPVMTGLVLHERLAKAQFIVMFIAVNMTFFPQHFLGLAGMPRRYSDYPDSYFMWNQLSSYGSLMSVFAVLLFVLIVWEAFLSQRSLLFVDATLYSREWSDGYFPPDFHSNIYQSYITIYKTYYSK</sequence>
<feature type="chain" id="PRO_0000183278" description="Cytochrome c oxidase subunit 1">
    <location>
        <begin position="1" status="less than"/>
        <end position="195"/>
    </location>
</feature>
<feature type="transmembrane region" description="Helical" evidence="2">
    <location>
        <begin position="12"/>
        <end position="32"/>
    </location>
</feature>
<feature type="transmembrane region" description="Helical" evidence="2">
    <location>
        <begin position="59"/>
        <end position="79"/>
    </location>
</feature>
<feature type="transmembrane region" description="Helical" evidence="2">
    <location>
        <begin position="88"/>
        <end position="108"/>
    </location>
</feature>
<feature type="transmembrane region" description="Helical" evidence="2">
    <location>
        <begin position="131"/>
        <end position="151"/>
    </location>
</feature>
<feature type="binding site" evidence="1">
    <location>
        <position position="42"/>
    </location>
    <ligand>
        <name>Mg(2+)</name>
        <dbReference type="ChEBI" id="CHEBI:18420"/>
        <note>ligand shared with subunit 2</note>
    </ligand>
</feature>
<feature type="binding site" evidence="1">
    <location>
        <position position="43"/>
    </location>
    <ligand>
        <name>Mg(2+)</name>
        <dbReference type="ChEBI" id="CHEBI:18420"/>
        <note>ligand shared with subunit 2</note>
    </ligand>
</feature>
<feature type="binding site" description="axial binding residue" evidence="1">
    <location>
        <position position="50"/>
    </location>
    <ligand>
        <name>heme a3</name>
        <dbReference type="ChEBI" id="CHEBI:83282"/>
        <note>high-spin</note>
    </ligand>
    <ligandPart>
        <name>Fe</name>
        <dbReference type="ChEBI" id="CHEBI:18248"/>
    </ligandPart>
</feature>
<feature type="binding site" description="axial binding residue" evidence="1">
    <location>
        <position position="52"/>
    </location>
    <ligand>
        <name>Fe(II)-heme a</name>
        <dbReference type="ChEBI" id="CHEBI:61715"/>
        <note>low-spin</note>
    </ligand>
    <ligandPart>
        <name>Fe</name>
        <dbReference type="ChEBI" id="CHEBI:18248"/>
    </ligandPart>
</feature>
<feature type="non-terminal residue">
    <location>
        <position position="1"/>
    </location>
</feature>
<geneLocation type="mitochondrion"/>
<evidence type="ECO:0000250" key="1">
    <source>
        <dbReference type="UniProtKB" id="P00401"/>
    </source>
</evidence>
<evidence type="ECO:0000255" key="2"/>
<evidence type="ECO:0000305" key="3"/>
<dbReference type="EC" id="7.1.1.9"/>
<dbReference type="EMBL" id="X71393">
    <property type="protein sequence ID" value="CAA50515.1"/>
    <property type="molecule type" value="Genomic_DNA"/>
</dbReference>
<dbReference type="SMR" id="Q09333"/>
<dbReference type="UniPathway" id="UPA00705"/>
<dbReference type="GO" id="GO:0005743">
    <property type="term" value="C:mitochondrial inner membrane"/>
    <property type="evidence" value="ECO:0007669"/>
    <property type="project" value="UniProtKB-SubCell"/>
</dbReference>
<dbReference type="GO" id="GO:0004129">
    <property type="term" value="F:cytochrome-c oxidase activity"/>
    <property type="evidence" value="ECO:0007669"/>
    <property type="project" value="UniProtKB-EC"/>
</dbReference>
<dbReference type="GO" id="GO:0020037">
    <property type="term" value="F:heme binding"/>
    <property type="evidence" value="ECO:0007669"/>
    <property type="project" value="InterPro"/>
</dbReference>
<dbReference type="GO" id="GO:0046872">
    <property type="term" value="F:metal ion binding"/>
    <property type="evidence" value="ECO:0007669"/>
    <property type="project" value="UniProtKB-KW"/>
</dbReference>
<dbReference type="GO" id="GO:0015990">
    <property type="term" value="P:electron transport coupled proton transport"/>
    <property type="evidence" value="ECO:0007669"/>
    <property type="project" value="TreeGrafter"/>
</dbReference>
<dbReference type="GO" id="GO:0006123">
    <property type="term" value="P:mitochondrial electron transport, cytochrome c to oxygen"/>
    <property type="evidence" value="ECO:0007669"/>
    <property type="project" value="TreeGrafter"/>
</dbReference>
<dbReference type="Gene3D" id="1.20.210.10">
    <property type="entry name" value="Cytochrome c oxidase-like, subunit I domain"/>
    <property type="match status" value="1"/>
</dbReference>
<dbReference type="InterPro" id="IPR023616">
    <property type="entry name" value="Cyt_c_oxase-like_su1_dom"/>
</dbReference>
<dbReference type="InterPro" id="IPR036927">
    <property type="entry name" value="Cyt_c_oxase-like_su1_sf"/>
</dbReference>
<dbReference type="InterPro" id="IPR000883">
    <property type="entry name" value="Cyt_C_Oxase_1"/>
</dbReference>
<dbReference type="PANTHER" id="PTHR10422">
    <property type="entry name" value="CYTOCHROME C OXIDASE SUBUNIT 1"/>
    <property type="match status" value="1"/>
</dbReference>
<dbReference type="PANTHER" id="PTHR10422:SF18">
    <property type="entry name" value="CYTOCHROME C OXIDASE SUBUNIT 1"/>
    <property type="match status" value="1"/>
</dbReference>
<dbReference type="Pfam" id="PF00115">
    <property type="entry name" value="COX1"/>
    <property type="match status" value="1"/>
</dbReference>
<dbReference type="PRINTS" id="PR01165">
    <property type="entry name" value="CYCOXIDASEI"/>
</dbReference>
<dbReference type="SUPFAM" id="SSF81442">
    <property type="entry name" value="Cytochrome c oxidase subunit I-like"/>
    <property type="match status" value="1"/>
</dbReference>
<dbReference type="PROSITE" id="PS50855">
    <property type="entry name" value="COX1"/>
    <property type="match status" value="1"/>
</dbReference>